<dbReference type="EMBL" id="AP009351">
    <property type="protein sequence ID" value="BAF66468.1"/>
    <property type="molecule type" value="Genomic_DNA"/>
</dbReference>
<dbReference type="RefSeq" id="WP_001792906.1">
    <property type="nucleotide sequence ID" value="NZ_JBBIAE010000003.1"/>
</dbReference>
<dbReference type="SMR" id="A6QDN6"/>
<dbReference type="KEGG" id="sae:NWMN_0196"/>
<dbReference type="HOGENOM" id="CLU_113736_0_1_9"/>
<dbReference type="Proteomes" id="UP000006386">
    <property type="component" value="Chromosome"/>
</dbReference>
<dbReference type="GO" id="GO:0005886">
    <property type="term" value="C:plasma membrane"/>
    <property type="evidence" value="ECO:0007669"/>
    <property type="project" value="UniProtKB-SubCell"/>
</dbReference>
<dbReference type="GO" id="GO:0019835">
    <property type="term" value="P:cytolysis"/>
    <property type="evidence" value="ECO:0007669"/>
    <property type="project" value="UniProtKB-UniRule"/>
</dbReference>
<dbReference type="GO" id="GO:0031640">
    <property type="term" value="P:killing of cells of another organism"/>
    <property type="evidence" value="ECO:0007669"/>
    <property type="project" value="UniProtKB-KW"/>
</dbReference>
<dbReference type="GO" id="GO:0012501">
    <property type="term" value="P:programmed cell death"/>
    <property type="evidence" value="ECO:0007669"/>
    <property type="project" value="UniProtKB-UniRule"/>
</dbReference>
<dbReference type="HAMAP" id="MF_01141">
    <property type="entry name" value="LrgA"/>
    <property type="match status" value="1"/>
</dbReference>
<dbReference type="InterPro" id="IPR023736">
    <property type="entry name" value="Antiholin-like_LrgA"/>
</dbReference>
<dbReference type="InterPro" id="IPR005538">
    <property type="entry name" value="LrgA/CidA"/>
</dbReference>
<dbReference type="NCBIfam" id="NF003155">
    <property type="entry name" value="PRK04125.1"/>
    <property type="match status" value="1"/>
</dbReference>
<dbReference type="PANTHER" id="PTHR33931:SF4">
    <property type="entry name" value="ANTIHOLIN-LIKE PROTEIN LRGA"/>
    <property type="match status" value="1"/>
</dbReference>
<dbReference type="PANTHER" id="PTHR33931">
    <property type="entry name" value="HOLIN-LIKE PROTEIN CIDA-RELATED"/>
    <property type="match status" value="1"/>
</dbReference>
<dbReference type="Pfam" id="PF03788">
    <property type="entry name" value="LrgA"/>
    <property type="match status" value="1"/>
</dbReference>
<sequence>MVVKQQKDASKPAHFFHQVIVIALVLFVSKIIESFMPIPMPASVIGLVLLFVLLCTGAVKLGEVEKVGTTLTNNIGLLFVPAGISVVNSLGVISQAPFLIIGLIIVSTILLLICTGYVTQIIMKVTSRSKGDKVTKKIKIEEAQAHD</sequence>
<accession>A6QDN6</accession>
<keyword id="KW-1003">Cell membrane</keyword>
<keyword id="KW-0204">Cytolysis</keyword>
<keyword id="KW-0472">Membrane</keyword>
<keyword id="KW-0812">Transmembrane</keyword>
<keyword id="KW-1133">Transmembrane helix</keyword>
<name>LRGA_STAAE</name>
<comment type="function">
    <text evidence="1">Inhibits the expression or activity of extracellular murein hydrolases by interacting, possibly with LrgB, with the holin-like proteins CidA and/or CidB. The LrgAB and CidAB proteins may affect the proton motive force of the membrane. May be involved in programmed cell death (PCD), possibly triggering PCD in response to antibiotics and environmental stresses.</text>
</comment>
<comment type="subcellular location">
    <subcellularLocation>
        <location evidence="1">Cell membrane</location>
        <topology evidence="1">Multi-pass membrane protein</topology>
    </subcellularLocation>
</comment>
<comment type="similarity">
    <text evidence="1">Belongs to the CidA/LrgA family. LrgA subfamily.</text>
</comment>
<proteinExistence type="inferred from homology"/>
<feature type="chain" id="PRO_1000073050" description="Antiholin-like protein LrgA">
    <location>
        <begin position="1"/>
        <end position="147"/>
    </location>
</feature>
<feature type="transmembrane region" description="Helical" evidence="1">
    <location>
        <begin position="12"/>
        <end position="32"/>
    </location>
</feature>
<feature type="transmembrane region" description="Helical" evidence="1">
    <location>
        <begin position="35"/>
        <end position="55"/>
    </location>
</feature>
<feature type="transmembrane region" description="Helical" evidence="1">
    <location>
        <begin position="74"/>
        <end position="94"/>
    </location>
</feature>
<feature type="transmembrane region" description="Helical" evidence="1">
    <location>
        <begin position="98"/>
        <end position="118"/>
    </location>
</feature>
<evidence type="ECO:0000255" key="1">
    <source>
        <dbReference type="HAMAP-Rule" id="MF_01141"/>
    </source>
</evidence>
<gene>
    <name evidence="1" type="primary">lrgA</name>
    <name type="ordered locus">NWMN_0196</name>
</gene>
<reference key="1">
    <citation type="journal article" date="2008" name="J. Bacteriol.">
        <title>Genome sequence of Staphylococcus aureus strain Newman and comparative analysis of staphylococcal genomes: polymorphism and evolution of two major pathogenicity islands.</title>
        <authorList>
            <person name="Baba T."/>
            <person name="Bae T."/>
            <person name="Schneewind O."/>
            <person name="Takeuchi F."/>
            <person name="Hiramatsu K."/>
        </authorList>
    </citation>
    <scope>NUCLEOTIDE SEQUENCE [LARGE SCALE GENOMIC DNA]</scope>
    <source>
        <strain>Newman</strain>
    </source>
</reference>
<protein>
    <recommendedName>
        <fullName evidence="1">Antiholin-like protein LrgA</fullName>
    </recommendedName>
</protein>
<organism>
    <name type="scientific">Staphylococcus aureus (strain Newman)</name>
    <dbReference type="NCBI Taxonomy" id="426430"/>
    <lineage>
        <taxon>Bacteria</taxon>
        <taxon>Bacillati</taxon>
        <taxon>Bacillota</taxon>
        <taxon>Bacilli</taxon>
        <taxon>Bacillales</taxon>
        <taxon>Staphylococcaceae</taxon>
        <taxon>Staphylococcus</taxon>
    </lineage>
</organism>